<protein>
    <recommendedName>
        <fullName>ORM1-like protein</fullName>
    </recommendedName>
    <alternativeName>
        <fullName>dORMDL</fullName>
    </alternativeName>
</protein>
<sequence length="154" mass="17570">MTSIAGGHGEANPNSSWLSARGFWLAYLLGLLSVHLLFLSVPFVSIPWAWTATNLLHNAAHLYFLHVIKGAPWLSTENDPSRRWTHWEQIDDGVQMTTTRKFLTAVPIVLFLLTCLYTRNNTEHFIPNFISLVVVTLPKLPQFHGVRLFNINKY</sequence>
<evidence type="ECO:0000250" key="1"/>
<evidence type="ECO:0000255" key="2"/>
<evidence type="ECO:0000269" key="3">
    <source>
    </source>
</evidence>
<evidence type="ECO:0000305" key="4"/>
<accession>Q9VP04</accession>
<accession>A0JQ27</accession>
<accession>Q8MX27</accession>
<gene>
    <name type="primary">ORMDL</name>
    <name type="ORF">CG14577</name>
</gene>
<feature type="chain" id="PRO_0000215644" description="ORM1-like protein">
    <location>
        <begin position="1"/>
        <end position="154"/>
    </location>
</feature>
<feature type="transmembrane region" description="Helical" evidence="2">
    <location>
        <begin position="23"/>
        <end position="43"/>
    </location>
</feature>
<feature type="transmembrane region" description="Helical" evidence="2">
    <location>
        <begin position="102"/>
        <end position="118"/>
    </location>
</feature>
<feature type="glycosylation site" description="N-linked (GlcNAc...) asparagine" evidence="2">
    <location>
        <position position="14"/>
    </location>
</feature>
<feature type="glycosylation site" description="N-linked (GlcNAc...) asparagine" evidence="2">
    <location>
        <position position="120"/>
    </location>
</feature>
<reference key="1">
    <citation type="journal article" date="2000" name="Science">
        <title>The genome sequence of Drosophila melanogaster.</title>
        <authorList>
            <person name="Adams M.D."/>
            <person name="Celniker S.E."/>
            <person name="Holt R.A."/>
            <person name="Evans C.A."/>
            <person name="Gocayne J.D."/>
            <person name="Amanatides P.G."/>
            <person name="Scherer S.E."/>
            <person name="Li P.W."/>
            <person name="Hoskins R.A."/>
            <person name="Galle R.F."/>
            <person name="George R.A."/>
            <person name="Lewis S.E."/>
            <person name="Richards S."/>
            <person name="Ashburner M."/>
            <person name="Henderson S.N."/>
            <person name="Sutton G.G."/>
            <person name="Wortman J.R."/>
            <person name="Yandell M.D."/>
            <person name="Zhang Q."/>
            <person name="Chen L.X."/>
            <person name="Brandon R.C."/>
            <person name="Rogers Y.-H.C."/>
            <person name="Blazej R.G."/>
            <person name="Champe M."/>
            <person name="Pfeiffer B.D."/>
            <person name="Wan K.H."/>
            <person name="Doyle C."/>
            <person name="Baxter E.G."/>
            <person name="Helt G."/>
            <person name="Nelson C.R."/>
            <person name="Miklos G.L.G."/>
            <person name="Abril J.F."/>
            <person name="Agbayani A."/>
            <person name="An H.-J."/>
            <person name="Andrews-Pfannkoch C."/>
            <person name="Baldwin D."/>
            <person name="Ballew R.M."/>
            <person name="Basu A."/>
            <person name="Baxendale J."/>
            <person name="Bayraktaroglu L."/>
            <person name="Beasley E.M."/>
            <person name="Beeson K.Y."/>
            <person name="Benos P.V."/>
            <person name="Berman B.P."/>
            <person name="Bhandari D."/>
            <person name="Bolshakov S."/>
            <person name="Borkova D."/>
            <person name="Botchan M.R."/>
            <person name="Bouck J."/>
            <person name="Brokstein P."/>
            <person name="Brottier P."/>
            <person name="Burtis K.C."/>
            <person name="Busam D.A."/>
            <person name="Butler H."/>
            <person name="Cadieu E."/>
            <person name="Center A."/>
            <person name="Chandra I."/>
            <person name="Cherry J.M."/>
            <person name="Cawley S."/>
            <person name="Dahlke C."/>
            <person name="Davenport L.B."/>
            <person name="Davies P."/>
            <person name="de Pablos B."/>
            <person name="Delcher A."/>
            <person name="Deng Z."/>
            <person name="Mays A.D."/>
            <person name="Dew I."/>
            <person name="Dietz S.M."/>
            <person name="Dodson K."/>
            <person name="Doup L.E."/>
            <person name="Downes M."/>
            <person name="Dugan-Rocha S."/>
            <person name="Dunkov B.C."/>
            <person name="Dunn P."/>
            <person name="Durbin K.J."/>
            <person name="Evangelista C.C."/>
            <person name="Ferraz C."/>
            <person name="Ferriera S."/>
            <person name="Fleischmann W."/>
            <person name="Fosler C."/>
            <person name="Gabrielian A.E."/>
            <person name="Garg N.S."/>
            <person name="Gelbart W.M."/>
            <person name="Glasser K."/>
            <person name="Glodek A."/>
            <person name="Gong F."/>
            <person name="Gorrell J.H."/>
            <person name="Gu Z."/>
            <person name="Guan P."/>
            <person name="Harris M."/>
            <person name="Harris N.L."/>
            <person name="Harvey D.A."/>
            <person name="Heiman T.J."/>
            <person name="Hernandez J.R."/>
            <person name="Houck J."/>
            <person name="Hostin D."/>
            <person name="Houston K.A."/>
            <person name="Howland T.J."/>
            <person name="Wei M.-H."/>
            <person name="Ibegwam C."/>
            <person name="Jalali M."/>
            <person name="Kalush F."/>
            <person name="Karpen G.H."/>
            <person name="Ke Z."/>
            <person name="Kennison J.A."/>
            <person name="Ketchum K.A."/>
            <person name="Kimmel B.E."/>
            <person name="Kodira C.D."/>
            <person name="Kraft C.L."/>
            <person name="Kravitz S."/>
            <person name="Kulp D."/>
            <person name="Lai Z."/>
            <person name="Lasko P."/>
            <person name="Lei Y."/>
            <person name="Levitsky A.A."/>
            <person name="Li J.H."/>
            <person name="Li Z."/>
            <person name="Liang Y."/>
            <person name="Lin X."/>
            <person name="Liu X."/>
            <person name="Mattei B."/>
            <person name="McIntosh T.C."/>
            <person name="McLeod M.P."/>
            <person name="McPherson D."/>
            <person name="Merkulov G."/>
            <person name="Milshina N.V."/>
            <person name="Mobarry C."/>
            <person name="Morris J."/>
            <person name="Moshrefi A."/>
            <person name="Mount S.M."/>
            <person name="Moy M."/>
            <person name="Murphy B."/>
            <person name="Murphy L."/>
            <person name="Muzny D.M."/>
            <person name="Nelson D.L."/>
            <person name="Nelson D.R."/>
            <person name="Nelson K.A."/>
            <person name="Nixon K."/>
            <person name="Nusskern D.R."/>
            <person name="Pacleb J.M."/>
            <person name="Palazzolo M."/>
            <person name="Pittman G.S."/>
            <person name="Pan S."/>
            <person name="Pollard J."/>
            <person name="Puri V."/>
            <person name="Reese M.G."/>
            <person name="Reinert K."/>
            <person name="Remington K."/>
            <person name="Saunders R.D.C."/>
            <person name="Scheeler F."/>
            <person name="Shen H."/>
            <person name="Shue B.C."/>
            <person name="Siden-Kiamos I."/>
            <person name="Simpson M."/>
            <person name="Skupski M.P."/>
            <person name="Smith T.J."/>
            <person name="Spier E."/>
            <person name="Spradling A.C."/>
            <person name="Stapleton M."/>
            <person name="Strong R."/>
            <person name="Sun E."/>
            <person name="Svirskas R."/>
            <person name="Tector C."/>
            <person name="Turner R."/>
            <person name="Venter E."/>
            <person name="Wang A.H."/>
            <person name="Wang X."/>
            <person name="Wang Z.-Y."/>
            <person name="Wassarman D.A."/>
            <person name="Weinstock G.M."/>
            <person name="Weissenbach J."/>
            <person name="Williams S.M."/>
            <person name="Woodage T."/>
            <person name="Worley K.C."/>
            <person name="Wu D."/>
            <person name="Yang S."/>
            <person name="Yao Q.A."/>
            <person name="Ye J."/>
            <person name="Yeh R.-F."/>
            <person name="Zaveri J.S."/>
            <person name="Zhan M."/>
            <person name="Zhang G."/>
            <person name="Zhao Q."/>
            <person name="Zheng L."/>
            <person name="Zheng X.H."/>
            <person name="Zhong F.N."/>
            <person name="Zhong W."/>
            <person name="Zhou X."/>
            <person name="Zhu S.C."/>
            <person name="Zhu X."/>
            <person name="Smith H.O."/>
            <person name="Gibbs R.A."/>
            <person name="Myers E.W."/>
            <person name="Rubin G.M."/>
            <person name="Venter J.C."/>
        </authorList>
    </citation>
    <scope>NUCLEOTIDE SEQUENCE [LARGE SCALE GENOMIC DNA]</scope>
    <source>
        <strain>Berkeley</strain>
    </source>
</reference>
<reference key="2">
    <citation type="journal article" date="2002" name="Genome Biol.">
        <title>Annotation of the Drosophila melanogaster euchromatic genome: a systematic review.</title>
        <authorList>
            <person name="Misra S."/>
            <person name="Crosby M.A."/>
            <person name="Mungall C.J."/>
            <person name="Matthews B.B."/>
            <person name="Campbell K.S."/>
            <person name="Hradecky P."/>
            <person name="Huang Y."/>
            <person name="Kaminker J.S."/>
            <person name="Millburn G.H."/>
            <person name="Prochnik S.E."/>
            <person name="Smith C.D."/>
            <person name="Tupy J.L."/>
            <person name="Whitfield E.J."/>
            <person name="Bayraktaroglu L."/>
            <person name="Berman B.P."/>
            <person name="Bettencourt B.R."/>
            <person name="Celniker S.E."/>
            <person name="de Grey A.D.N.J."/>
            <person name="Drysdale R.A."/>
            <person name="Harris N.L."/>
            <person name="Richter J."/>
            <person name="Russo S."/>
            <person name="Schroeder A.J."/>
            <person name="Shu S.Q."/>
            <person name="Stapleton M."/>
            <person name="Yamada C."/>
            <person name="Ashburner M."/>
            <person name="Gelbart W.M."/>
            <person name="Rubin G.M."/>
            <person name="Lewis S.E."/>
        </authorList>
    </citation>
    <scope>GENOME REANNOTATION</scope>
    <source>
        <strain>Berkeley</strain>
    </source>
</reference>
<reference key="3">
    <citation type="submission" date="2006-11" db="EMBL/GenBank/DDBJ databases">
        <authorList>
            <person name="Stapleton M."/>
            <person name="Carlson J.W."/>
            <person name="Chavez C."/>
            <person name="Frise E."/>
            <person name="George R.A."/>
            <person name="Kapadia B."/>
            <person name="Pacleb J.M."/>
            <person name="Park S."/>
            <person name="Wan K.H."/>
            <person name="Yu C."/>
            <person name="Celniker S.E."/>
        </authorList>
    </citation>
    <scope>NUCLEOTIDE SEQUENCE [LARGE SCALE MRNA]</scope>
    <source>
        <strain>Berkeley</strain>
    </source>
</reference>
<reference key="4">
    <citation type="journal article" date="2002" name="Genome Biol.">
        <title>ORMDL proteins are a conserved new family of endoplasmic reticulum membrane proteins.</title>
        <authorList>
            <person name="Hjelmqvist L."/>
            <person name="Tuson M."/>
            <person name="Marfany G."/>
            <person name="Herrero E."/>
            <person name="Balcells S."/>
            <person name="Gonzalez-Duarte R."/>
        </authorList>
    </citation>
    <scope>NUCLEOTIDE SEQUENCE [MRNA] OF 9-137</scope>
    <scope>TISSUE SPECIFICITY</scope>
</reference>
<proteinExistence type="evidence at transcript level"/>
<keyword id="KW-0256">Endoplasmic reticulum</keyword>
<keyword id="KW-0325">Glycoprotein</keyword>
<keyword id="KW-0472">Membrane</keyword>
<keyword id="KW-1185">Reference proteome</keyword>
<keyword id="KW-0812">Transmembrane</keyword>
<keyword id="KW-1133">Transmembrane helix</keyword>
<comment type="function">
    <text evidence="1">Negative regulator of sphingolipid synthesis.</text>
</comment>
<comment type="subcellular location">
    <subcellularLocation>
        <location evidence="1">Endoplasmic reticulum membrane</location>
        <topology evidence="1">Multi-pass membrane protein</topology>
    </subcellularLocation>
</comment>
<comment type="tissue specificity">
    <text evidence="3">Ubiquitously and homogeneously expressed in the syncytial blastoderm and during the cellularization stage. In stages 11-12, it is expressed in the germ-band layer In later stages (stage 14), it is mainly detected in the ectodermal tissues. In imaginal disks of third-instar larvae, it is uniformly and homogeneously expressed in eye-antenna, leg, wing and haltere imaginal disks, which is consistent with the former ectodermal expression detected in latestage embryos.</text>
</comment>
<comment type="similarity">
    <text evidence="4">Belongs to the ORM family.</text>
</comment>
<dbReference type="EMBL" id="AE014296">
    <property type="protein sequence ID" value="AAF51758.1"/>
    <property type="molecule type" value="Genomic_DNA"/>
</dbReference>
<dbReference type="EMBL" id="BT023364">
    <property type="protein sequence ID" value="AAY55780.1"/>
    <property type="molecule type" value="mRNA"/>
</dbReference>
<dbReference type="EMBL" id="BT029397">
    <property type="protein sequence ID" value="ABK56983.1"/>
    <property type="molecule type" value="mRNA"/>
</dbReference>
<dbReference type="EMBL" id="AF395703">
    <property type="protein sequence ID" value="AAM43501.1"/>
    <property type="molecule type" value="mRNA"/>
</dbReference>
<dbReference type="RefSeq" id="NP_730669.1">
    <property type="nucleotide sequence ID" value="NM_168929.2"/>
</dbReference>
<dbReference type="SMR" id="Q9VP04"/>
<dbReference type="BioGRID" id="65648">
    <property type="interactions" value="18"/>
</dbReference>
<dbReference type="FunCoup" id="Q9VP04">
    <property type="interactions" value="962"/>
</dbReference>
<dbReference type="IntAct" id="Q9VP04">
    <property type="interactions" value="20"/>
</dbReference>
<dbReference type="STRING" id="7227.FBpp0078077"/>
<dbReference type="GlyCosmos" id="Q9VP04">
    <property type="glycosylation" value="2 sites, No reported glycans"/>
</dbReference>
<dbReference type="GlyGen" id="Q9VP04">
    <property type="glycosylation" value="2 sites"/>
</dbReference>
<dbReference type="PaxDb" id="7227-FBpp0078077"/>
<dbReference type="DNASU" id="40404"/>
<dbReference type="EnsemblMetazoa" id="FBtr0078423">
    <property type="protein sequence ID" value="FBpp0078077"/>
    <property type="gene ID" value="FBgn0037110"/>
</dbReference>
<dbReference type="GeneID" id="40404"/>
<dbReference type="KEGG" id="dme:Dmel_CG14577"/>
<dbReference type="UCSC" id="CG14577-RA">
    <property type="organism name" value="d. melanogaster"/>
</dbReference>
<dbReference type="AGR" id="FB:FBgn0037110"/>
<dbReference type="CTD" id="40404"/>
<dbReference type="FlyBase" id="FBgn0037110">
    <property type="gene designation" value="ORMDL"/>
</dbReference>
<dbReference type="VEuPathDB" id="VectorBase:FBgn0037110"/>
<dbReference type="eggNOG" id="KOG3319">
    <property type="taxonomic scope" value="Eukaryota"/>
</dbReference>
<dbReference type="GeneTree" id="ENSGT00950000183178"/>
<dbReference type="HOGENOM" id="CLU_072117_3_0_1"/>
<dbReference type="InParanoid" id="Q9VP04"/>
<dbReference type="OMA" id="STHYTHF"/>
<dbReference type="OrthoDB" id="1932233at2759"/>
<dbReference type="PhylomeDB" id="Q9VP04"/>
<dbReference type="Reactome" id="R-DME-1660661">
    <property type="pathway name" value="Sphingolipid de novo biosynthesis"/>
</dbReference>
<dbReference type="Reactome" id="R-DME-6798695">
    <property type="pathway name" value="Neutrophil degranulation"/>
</dbReference>
<dbReference type="BioGRID-ORCS" id="40404">
    <property type="hits" value="0 hits in 3 CRISPR screens"/>
</dbReference>
<dbReference type="GenomeRNAi" id="40404"/>
<dbReference type="PRO" id="PR:Q9VP04"/>
<dbReference type="Proteomes" id="UP000000803">
    <property type="component" value="Chromosome 3L"/>
</dbReference>
<dbReference type="Bgee" id="FBgn0037110">
    <property type="expression patterns" value="Expressed in adult posterior midgut class II enteroendocrine cell in adult midgut (Drosophila) and 118 other cell types or tissues"/>
</dbReference>
<dbReference type="ExpressionAtlas" id="Q9VP04">
    <property type="expression patterns" value="baseline and differential"/>
</dbReference>
<dbReference type="GO" id="GO:0005829">
    <property type="term" value="C:cytosol"/>
    <property type="evidence" value="ECO:0007005"/>
    <property type="project" value="FlyBase"/>
</dbReference>
<dbReference type="GO" id="GO:0005789">
    <property type="term" value="C:endoplasmic reticulum membrane"/>
    <property type="evidence" value="ECO:0000250"/>
    <property type="project" value="UniProtKB"/>
</dbReference>
<dbReference type="GO" id="GO:0017059">
    <property type="term" value="C:serine palmitoyltransferase complex"/>
    <property type="evidence" value="ECO:0000318"/>
    <property type="project" value="GO_Central"/>
</dbReference>
<dbReference type="GO" id="GO:0006672">
    <property type="term" value="P:ceramide metabolic process"/>
    <property type="evidence" value="ECO:0000318"/>
    <property type="project" value="GO_Central"/>
</dbReference>
<dbReference type="GO" id="GO:0090156">
    <property type="term" value="P:intracellular sphingolipid homeostasis"/>
    <property type="evidence" value="ECO:0000318"/>
    <property type="project" value="GO_Central"/>
</dbReference>
<dbReference type="GO" id="GO:2000303">
    <property type="term" value="P:regulation of ceramide biosynthetic process"/>
    <property type="evidence" value="ECO:0007669"/>
    <property type="project" value="UniProtKB-ARBA"/>
</dbReference>
<dbReference type="GO" id="GO:0030148">
    <property type="term" value="P:sphingolipid biosynthetic process"/>
    <property type="evidence" value="ECO:0000318"/>
    <property type="project" value="GO_Central"/>
</dbReference>
<dbReference type="InterPro" id="IPR007203">
    <property type="entry name" value="ORMDL"/>
</dbReference>
<dbReference type="PANTHER" id="PTHR12665">
    <property type="entry name" value="ORMDL PROTEINS"/>
    <property type="match status" value="1"/>
</dbReference>
<dbReference type="Pfam" id="PF04061">
    <property type="entry name" value="ORMDL"/>
    <property type="match status" value="1"/>
</dbReference>
<dbReference type="PIRSF" id="PIRSF018147">
    <property type="entry name" value="ORMDL"/>
    <property type="match status" value="1"/>
</dbReference>
<organism>
    <name type="scientific">Drosophila melanogaster</name>
    <name type="common">Fruit fly</name>
    <dbReference type="NCBI Taxonomy" id="7227"/>
    <lineage>
        <taxon>Eukaryota</taxon>
        <taxon>Metazoa</taxon>
        <taxon>Ecdysozoa</taxon>
        <taxon>Arthropoda</taxon>
        <taxon>Hexapoda</taxon>
        <taxon>Insecta</taxon>
        <taxon>Pterygota</taxon>
        <taxon>Neoptera</taxon>
        <taxon>Endopterygota</taxon>
        <taxon>Diptera</taxon>
        <taxon>Brachycera</taxon>
        <taxon>Muscomorpha</taxon>
        <taxon>Ephydroidea</taxon>
        <taxon>Drosophilidae</taxon>
        <taxon>Drosophila</taxon>
        <taxon>Sophophora</taxon>
    </lineage>
</organism>
<name>ORMDL_DROME</name>